<evidence type="ECO:0000255" key="1">
    <source>
        <dbReference type="HAMAP-Rule" id="MF_01872"/>
    </source>
</evidence>
<comment type="function">
    <text evidence="1">Specifically methylates the adenine in position 37 of tRNA(1)(Val) (anticodon cmo5UAC).</text>
</comment>
<comment type="catalytic activity">
    <reaction evidence="1">
        <text>adenosine(37) in tRNA1(Val) + S-adenosyl-L-methionine = N(6)-methyladenosine(37) in tRNA1(Val) + S-adenosyl-L-homocysteine + H(+)</text>
        <dbReference type="Rhea" id="RHEA:43160"/>
        <dbReference type="Rhea" id="RHEA-COMP:10369"/>
        <dbReference type="Rhea" id="RHEA-COMP:10370"/>
        <dbReference type="ChEBI" id="CHEBI:15378"/>
        <dbReference type="ChEBI" id="CHEBI:57856"/>
        <dbReference type="ChEBI" id="CHEBI:59789"/>
        <dbReference type="ChEBI" id="CHEBI:74411"/>
        <dbReference type="ChEBI" id="CHEBI:74449"/>
        <dbReference type="EC" id="2.1.1.223"/>
    </reaction>
</comment>
<comment type="subcellular location">
    <subcellularLocation>
        <location evidence="1">Cytoplasm</location>
    </subcellularLocation>
</comment>
<comment type="similarity">
    <text evidence="1">Belongs to the methyltransferase superfamily. tRNA (adenine-N(6)-)-methyltransferase family.</text>
</comment>
<dbReference type="EC" id="2.1.1.223" evidence="1"/>
<dbReference type="EMBL" id="AE014613">
    <property type="protein sequence ID" value="AAO67993.1"/>
    <property type="molecule type" value="Genomic_DNA"/>
</dbReference>
<dbReference type="EMBL" id="AL513382">
    <property type="protein sequence ID" value="CAD02791.1"/>
    <property type="molecule type" value="Genomic_DNA"/>
</dbReference>
<dbReference type="RefSeq" id="NP_457118.1">
    <property type="nucleotide sequence ID" value="NC_003198.1"/>
</dbReference>
<dbReference type="SMR" id="Q8Z4J9"/>
<dbReference type="STRING" id="220341.gene:17586725"/>
<dbReference type="KEGG" id="stt:t0268"/>
<dbReference type="KEGG" id="sty:STY2835"/>
<dbReference type="PATRIC" id="fig|220341.7.peg.2883"/>
<dbReference type="eggNOG" id="COG4123">
    <property type="taxonomic scope" value="Bacteria"/>
</dbReference>
<dbReference type="HOGENOM" id="CLU_061983_0_0_6"/>
<dbReference type="OMA" id="NQYTEAF"/>
<dbReference type="OrthoDB" id="5383291at2"/>
<dbReference type="Proteomes" id="UP000000541">
    <property type="component" value="Chromosome"/>
</dbReference>
<dbReference type="Proteomes" id="UP000002670">
    <property type="component" value="Chromosome"/>
</dbReference>
<dbReference type="GO" id="GO:0005737">
    <property type="term" value="C:cytoplasm"/>
    <property type="evidence" value="ECO:0007669"/>
    <property type="project" value="UniProtKB-SubCell"/>
</dbReference>
<dbReference type="GO" id="GO:0003676">
    <property type="term" value="F:nucleic acid binding"/>
    <property type="evidence" value="ECO:0007669"/>
    <property type="project" value="InterPro"/>
</dbReference>
<dbReference type="GO" id="GO:0016430">
    <property type="term" value="F:tRNA (adenine-N6)-methyltransferase activity"/>
    <property type="evidence" value="ECO:0007669"/>
    <property type="project" value="UniProtKB-UniRule"/>
</dbReference>
<dbReference type="GO" id="GO:0032259">
    <property type="term" value="P:methylation"/>
    <property type="evidence" value="ECO:0007669"/>
    <property type="project" value="UniProtKB-KW"/>
</dbReference>
<dbReference type="GO" id="GO:0008033">
    <property type="term" value="P:tRNA processing"/>
    <property type="evidence" value="ECO:0007669"/>
    <property type="project" value="UniProtKB-UniRule"/>
</dbReference>
<dbReference type="CDD" id="cd02440">
    <property type="entry name" value="AdoMet_MTases"/>
    <property type="match status" value="1"/>
</dbReference>
<dbReference type="Gene3D" id="3.40.50.150">
    <property type="entry name" value="Vaccinia Virus protein VP39"/>
    <property type="match status" value="1"/>
</dbReference>
<dbReference type="HAMAP" id="MF_01872">
    <property type="entry name" value="tRNA_methyltr_YfiC"/>
    <property type="match status" value="1"/>
</dbReference>
<dbReference type="InterPro" id="IPR002052">
    <property type="entry name" value="DNA_methylase_N6_adenine_CS"/>
</dbReference>
<dbReference type="InterPro" id="IPR029063">
    <property type="entry name" value="SAM-dependent_MTases_sf"/>
</dbReference>
<dbReference type="InterPro" id="IPR007848">
    <property type="entry name" value="Small_mtfrase_dom"/>
</dbReference>
<dbReference type="InterPro" id="IPR050210">
    <property type="entry name" value="tRNA_Adenine-N(6)_MTase"/>
</dbReference>
<dbReference type="InterPro" id="IPR022882">
    <property type="entry name" value="tRNA_adenine-N6_MeTrfase"/>
</dbReference>
<dbReference type="NCBIfam" id="NF047853">
    <property type="entry name" value="tRm6a37MtseTrmN"/>
    <property type="match status" value="1"/>
</dbReference>
<dbReference type="PANTHER" id="PTHR47739">
    <property type="entry name" value="TRNA1(VAL) (ADENINE(37)-N6)-METHYLTRANSFERASE"/>
    <property type="match status" value="1"/>
</dbReference>
<dbReference type="PANTHER" id="PTHR47739:SF1">
    <property type="entry name" value="TRNA1(VAL) (ADENINE(37)-N6)-METHYLTRANSFERASE"/>
    <property type="match status" value="1"/>
</dbReference>
<dbReference type="Pfam" id="PF05175">
    <property type="entry name" value="MTS"/>
    <property type="match status" value="1"/>
</dbReference>
<dbReference type="SUPFAM" id="SSF53335">
    <property type="entry name" value="S-adenosyl-L-methionine-dependent methyltransferases"/>
    <property type="match status" value="1"/>
</dbReference>
<dbReference type="PROSITE" id="PS00092">
    <property type="entry name" value="N6_MTASE"/>
    <property type="match status" value="1"/>
</dbReference>
<proteinExistence type="inferred from homology"/>
<accession>Q8Z4J9</accession>
<accession>Q7CBN0</accession>
<name>TRMN6_SALTI</name>
<organism>
    <name type="scientific">Salmonella typhi</name>
    <dbReference type="NCBI Taxonomy" id="90370"/>
    <lineage>
        <taxon>Bacteria</taxon>
        <taxon>Pseudomonadati</taxon>
        <taxon>Pseudomonadota</taxon>
        <taxon>Gammaproteobacteria</taxon>
        <taxon>Enterobacterales</taxon>
        <taxon>Enterobacteriaceae</taxon>
        <taxon>Salmonella</taxon>
    </lineage>
</organism>
<protein>
    <recommendedName>
        <fullName evidence="1">tRNA1(Val) (adenine(37)-N6)-methyltransferase</fullName>
        <ecNumber evidence="1">2.1.1.223</ecNumber>
    </recommendedName>
    <alternativeName>
        <fullName evidence="1">tRNA m6A37 methyltransferase</fullName>
    </alternativeName>
</protein>
<keyword id="KW-0963">Cytoplasm</keyword>
<keyword id="KW-0489">Methyltransferase</keyword>
<keyword id="KW-0949">S-adenosyl-L-methionine</keyword>
<keyword id="KW-0808">Transferase</keyword>
<keyword id="KW-0819">tRNA processing</keyword>
<gene>
    <name evidence="1" type="primary">yfiC</name>
    <name type="ordered locus">STY2835</name>
    <name type="ordered locus">t0268</name>
</gene>
<feature type="chain" id="PRO_0000387411" description="tRNA1(Val) (adenine(37)-N6)-methyltransferase">
    <location>
        <begin position="1"/>
        <end position="245"/>
    </location>
</feature>
<reference key="1">
    <citation type="journal article" date="2001" name="Nature">
        <title>Complete genome sequence of a multiple drug resistant Salmonella enterica serovar Typhi CT18.</title>
        <authorList>
            <person name="Parkhill J."/>
            <person name="Dougan G."/>
            <person name="James K.D."/>
            <person name="Thomson N.R."/>
            <person name="Pickard D."/>
            <person name="Wain J."/>
            <person name="Churcher C.M."/>
            <person name="Mungall K.L."/>
            <person name="Bentley S.D."/>
            <person name="Holden M.T.G."/>
            <person name="Sebaihia M."/>
            <person name="Baker S."/>
            <person name="Basham D."/>
            <person name="Brooks K."/>
            <person name="Chillingworth T."/>
            <person name="Connerton P."/>
            <person name="Cronin A."/>
            <person name="Davis P."/>
            <person name="Davies R.M."/>
            <person name="Dowd L."/>
            <person name="White N."/>
            <person name="Farrar J."/>
            <person name="Feltwell T."/>
            <person name="Hamlin N."/>
            <person name="Haque A."/>
            <person name="Hien T.T."/>
            <person name="Holroyd S."/>
            <person name="Jagels K."/>
            <person name="Krogh A."/>
            <person name="Larsen T.S."/>
            <person name="Leather S."/>
            <person name="Moule S."/>
            <person name="O'Gaora P."/>
            <person name="Parry C."/>
            <person name="Quail M.A."/>
            <person name="Rutherford K.M."/>
            <person name="Simmonds M."/>
            <person name="Skelton J."/>
            <person name="Stevens K."/>
            <person name="Whitehead S."/>
            <person name="Barrell B.G."/>
        </authorList>
    </citation>
    <scope>NUCLEOTIDE SEQUENCE [LARGE SCALE GENOMIC DNA]</scope>
    <source>
        <strain>CT18</strain>
    </source>
</reference>
<reference key="2">
    <citation type="journal article" date="2003" name="J. Bacteriol.">
        <title>Comparative genomics of Salmonella enterica serovar Typhi strains Ty2 and CT18.</title>
        <authorList>
            <person name="Deng W."/>
            <person name="Liou S.-R."/>
            <person name="Plunkett G. III"/>
            <person name="Mayhew G.F."/>
            <person name="Rose D.J."/>
            <person name="Burland V."/>
            <person name="Kodoyianni V."/>
            <person name="Schwartz D.C."/>
            <person name="Blattner F.R."/>
        </authorList>
    </citation>
    <scope>NUCLEOTIDE SEQUENCE [LARGE SCALE GENOMIC DNA]</scope>
    <source>
        <strain>ATCC 700931 / Ty2</strain>
    </source>
</reference>
<sequence length="245" mass="27259">MSQSGSVLRRNGFTFKQFFVAHDRCAMKVGTDGILLGAWAPVADVKRILDIGTGSGLLALMLAQRTDDSVPVDAVELDAGAAMQAQENVAHSPWPHRITVHTDDIQRWAPRQTVRFDLIISNPPYYEPGVECSTPQREQARYTATLDHQTLLAIAADCITEDGFFCVVLPEQIGNAFTQQALNMGWHLRLRTDVAENEARLPHRVLLAFSPQAGECFSDRLVIRGSDQNYSESYTALTQAFYLFM</sequence>